<gene>
    <name evidence="5" type="primary">CHS3</name>
    <name type="ORF">MGG_09551</name>
</gene>
<sequence length="902" mass="102162">MAYNRLDDDYFDNRRPMNNRPPPHRTPSPGHPLQHGYQLDDAPYGRPGLNSASNLDIPMGPGRHTPSDQLQLHTAHSMANMSEPGYQQQPGGYRDEYSVNPEQHHDAYYNPTYTPTPNEAQTPYGEPGYEHDGRPLLPQQDSYGQYSDNPQQQQQQQGGLKRWKTVKRVPLYMGNLVLDCPVPPKLLNQFPHGERDEFTHMRYSAATCDPNDFYDEKFTLRQRLFSKPRETELFIVVTMYNEDEVLFARTMIGVFKNIEYMCKRPESKTWGKEAWKKIVVCIVSDGRAKINPRTRALLAGLGVYQEGIARQNVDDKPTTAHIYEYTTQIGMALKNDVVQLLPRQQPVQLLFCLKENNQKKINSHRWFFSAFGRVLNPNICVLLDAGTKPGGNSIYHLWKAFDLEPMCAGACGEIKAMLGTGGKNLFNPLVAAQNFEYKMSNILDKPLESAFGFISVLPGAFSAYRYIALQNDKNGQGPLEKYFAGEKLHGAGAGIFTANMYLAEDRILCFELVTKRNCHWILQYVKSATGETDVPDTATELILQRRRWLNGSFFAAIYAIAHFYQFFRSDHSFFRKIAFFIEFTFNTVNMIFAWFAIGNFFLVFKILTTSLGDETLLGTTGKILGVCFEWLYGVSLITCFVLAMGNRPAGSGPYYLAMIYFWAIIFCYLLFAAVFISVKAIMADAQRGLSVPELLKDQVVVTLILSIMSTYGIWLVASLLMFDPWHMFTSLVQYMLLSPTFTNVLNVYAFCNTHDISWGTKGDDKPDKLPSVSTKDGAGKADLPDEADLNTMYERELAVFAQKHVEEKKALTPSQLDEKQLDYYRGVRTVVVLLWMVTNFGLAAVVLSTAGLDRITPNTNAETKEQRATIYMAVVLYSVAALSGFKFIGAMWFLVVRMFRGV</sequence>
<feature type="chain" id="PRO_0000460878" description="Chitin synthase 3">
    <location>
        <begin position="1"/>
        <end position="902"/>
    </location>
</feature>
<feature type="transmembrane region" description="Helical" evidence="1">
    <location>
        <begin position="449"/>
        <end position="469"/>
    </location>
</feature>
<feature type="transmembrane region" description="Helical" evidence="1">
    <location>
        <begin position="547"/>
        <end position="567"/>
    </location>
</feature>
<feature type="transmembrane region" description="Helical" evidence="1">
    <location>
        <begin position="577"/>
        <end position="597"/>
    </location>
</feature>
<feature type="transmembrane region" description="Helical" evidence="1">
    <location>
        <begin position="623"/>
        <end position="643"/>
    </location>
</feature>
<feature type="transmembrane region" description="Helical" evidence="1">
    <location>
        <begin position="656"/>
        <end position="676"/>
    </location>
</feature>
<feature type="transmembrane region" description="Helical" evidence="1">
    <location>
        <begin position="699"/>
        <end position="719"/>
    </location>
</feature>
<feature type="transmembrane region" description="Helical" evidence="1">
    <location>
        <begin position="731"/>
        <end position="751"/>
    </location>
</feature>
<feature type="transmembrane region" description="Helical" evidence="1">
    <location>
        <begin position="830"/>
        <end position="850"/>
    </location>
</feature>
<feature type="transmembrane region" description="Helical" evidence="1">
    <location>
        <begin position="874"/>
        <end position="894"/>
    </location>
</feature>
<feature type="region of interest" description="Disordered" evidence="3">
    <location>
        <begin position="1"/>
        <end position="68"/>
    </location>
</feature>
<feature type="region of interest" description="Disordered" evidence="3">
    <location>
        <begin position="104"/>
        <end position="161"/>
    </location>
</feature>
<feature type="compositionally biased region" description="Basic and acidic residues" evidence="3">
    <location>
        <begin position="1"/>
        <end position="15"/>
    </location>
</feature>
<feature type="compositionally biased region" description="Pro residues" evidence="3">
    <location>
        <begin position="19"/>
        <end position="30"/>
    </location>
</feature>
<feature type="compositionally biased region" description="Polar residues" evidence="3">
    <location>
        <begin position="111"/>
        <end position="121"/>
    </location>
</feature>
<feature type="compositionally biased region" description="Polar residues" evidence="3">
    <location>
        <begin position="139"/>
        <end position="150"/>
    </location>
</feature>
<feature type="glycosylation site" description="N-linked (GlcNAc...) asparagine" evidence="2">
    <location>
        <position position="80"/>
    </location>
</feature>
<name>CHS3_PYRO7</name>
<proteinExistence type="evidence at transcript level"/>
<protein>
    <recommendedName>
        <fullName evidence="5">Chitin synthase 3</fullName>
        <ecNumber evidence="7">2.4.1.16</ecNumber>
    </recommendedName>
    <alternativeName>
        <fullName evidence="6">Chitin-UDP acetyl-glucosaminyl transferase 3</fullName>
    </alternativeName>
    <alternativeName>
        <fullName evidence="5">Class-III chitin synthase 3</fullName>
    </alternativeName>
</protein>
<keyword id="KW-1003">Cell membrane</keyword>
<keyword id="KW-0961">Cell wall biogenesis/degradation</keyword>
<keyword id="KW-0325">Glycoprotein</keyword>
<keyword id="KW-0328">Glycosyltransferase</keyword>
<keyword id="KW-0472">Membrane</keyword>
<keyword id="KW-1185">Reference proteome</keyword>
<keyword id="KW-0808">Transferase</keyword>
<keyword id="KW-0812">Transmembrane</keyword>
<keyword id="KW-1133">Transmembrane helix</keyword>
<evidence type="ECO:0000255" key="1"/>
<evidence type="ECO:0000255" key="2">
    <source>
        <dbReference type="PROSITE-ProRule" id="PRU00498"/>
    </source>
</evidence>
<evidence type="ECO:0000256" key="3">
    <source>
        <dbReference type="SAM" id="MobiDB-lite"/>
    </source>
</evidence>
<evidence type="ECO:0000269" key="4">
    <source>
    </source>
</evidence>
<evidence type="ECO:0000303" key="5">
    <source>
    </source>
</evidence>
<evidence type="ECO:0000305" key="6"/>
<evidence type="ECO:0000305" key="7">
    <source>
    </source>
</evidence>
<comment type="function">
    <text evidence="4 7">Polymerizes chitin, a structural polymer of the cell wall and septum, by transferring the sugar moiety of UDP-GlcNAc to the non-reducing end of the growing chitin polymer (Probable). CHS1 and CHS3 have compensatory functions in cell wall modifications in responses to stresses (PubMed:22346755). Might function as a negative regulator on expression of other CHS genes (PubMed:22346755).</text>
</comment>
<comment type="catalytic activity">
    <reaction evidence="7">
        <text>[(1-&gt;4)-N-acetyl-beta-D-glucosaminyl](n) + UDP-N-acetyl-alpha-D-glucosamine = [(1-&gt;4)-N-acetyl-beta-D-glucosaminyl](n+1) + UDP + H(+)</text>
        <dbReference type="Rhea" id="RHEA:16637"/>
        <dbReference type="Rhea" id="RHEA-COMP:9593"/>
        <dbReference type="Rhea" id="RHEA-COMP:9595"/>
        <dbReference type="ChEBI" id="CHEBI:15378"/>
        <dbReference type="ChEBI" id="CHEBI:17029"/>
        <dbReference type="ChEBI" id="CHEBI:57705"/>
        <dbReference type="ChEBI" id="CHEBI:58223"/>
        <dbReference type="EC" id="2.4.1.16"/>
    </reaction>
    <physiologicalReaction direction="left-to-right" evidence="7">
        <dbReference type="Rhea" id="RHEA:16638"/>
    </physiologicalReaction>
</comment>
<comment type="subcellular location">
    <subcellularLocation>
        <location evidence="6">Cell membrane</location>
        <topology evidence="1">Multi-pass membrane protein</topology>
    </subcellularLocation>
</comment>
<comment type="induction">
    <text evidence="4">Expression is the lowest in vegetative hyphae and the highest in conidia (PubMed:22346755). Expression levels are increased in appressoria and infected rice leaves in comparison with vegetative hyphae (PubMed:22346755).</text>
</comment>
<comment type="disruption phenotype">
    <text evidence="4">Does not affect vegetative growth (PubMed:22346755). Does not significantly changes in the chitin content in vegetative hyphae, nor in conidia (PubMed:22346755).</text>
</comment>
<comment type="similarity">
    <text evidence="6">Belongs to the chitin synthase family. Class II subfamily.</text>
</comment>
<accession>G4N1B2</accession>
<dbReference type="EC" id="2.4.1.16" evidence="7"/>
<dbReference type="EMBL" id="CM001233">
    <property type="protein sequence ID" value="EHA52383.1"/>
    <property type="molecule type" value="Genomic_DNA"/>
</dbReference>
<dbReference type="RefSeq" id="XP_003712190.1">
    <property type="nucleotide sequence ID" value="XM_003712142.1"/>
</dbReference>
<dbReference type="SMR" id="G4N1B2"/>
<dbReference type="FunCoup" id="G4N1B2">
    <property type="interactions" value="84"/>
</dbReference>
<dbReference type="STRING" id="242507.G4N1B2"/>
<dbReference type="EnsemblFungi" id="MGG_09551T0">
    <property type="protein sequence ID" value="MGG_09551T0"/>
    <property type="gene ID" value="MGG_09551"/>
</dbReference>
<dbReference type="GeneID" id="2680449"/>
<dbReference type="KEGG" id="mgr:MGG_09551"/>
<dbReference type="VEuPathDB" id="FungiDB:MGG_09551"/>
<dbReference type="eggNOG" id="KOG2571">
    <property type="taxonomic scope" value="Eukaryota"/>
</dbReference>
<dbReference type="HOGENOM" id="CLU_004760_3_1_1"/>
<dbReference type="InParanoid" id="G4N1B2"/>
<dbReference type="OMA" id="AWILHYV"/>
<dbReference type="OrthoDB" id="26569at2759"/>
<dbReference type="Proteomes" id="UP000009058">
    <property type="component" value="Chromosome 3"/>
</dbReference>
<dbReference type="GO" id="GO:0030428">
    <property type="term" value="C:cell septum"/>
    <property type="evidence" value="ECO:0007669"/>
    <property type="project" value="TreeGrafter"/>
</dbReference>
<dbReference type="GO" id="GO:0045009">
    <property type="term" value="C:chitosome"/>
    <property type="evidence" value="ECO:0007669"/>
    <property type="project" value="EnsemblFungi"/>
</dbReference>
<dbReference type="GO" id="GO:0005886">
    <property type="term" value="C:plasma membrane"/>
    <property type="evidence" value="ECO:0007669"/>
    <property type="project" value="UniProtKB-SubCell"/>
</dbReference>
<dbReference type="GO" id="GO:0004100">
    <property type="term" value="F:chitin synthase activity"/>
    <property type="evidence" value="ECO:0007669"/>
    <property type="project" value="UniProtKB-EC"/>
</dbReference>
<dbReference type="GO" id="GO:0030476">
    <property type="term" value="P:ascospore wall assembly"/>
    <property type="evidence" value="ECO:0007669"/>
    <property type="project" value="EnsemblFungi"/>
</dbReference>
<dbReference type="GO" id="GO:0006031">
    <property type="term" value="P:chitin biosynthetic process"/>
    <property type="evidence" value="ECO:0007669"/>
    <property type="project" value="EnsemblFungi"/>
</dbReference>
<dbReference type="GO" id="GO:0000920">
    <property type="term" value="P:septum digestion after cytokinesis"/>
    <property type="evidence" value="ECO:0007669"/>
    <property type="project" value="EnsemblFungi"/>
</dbReference>
<dbReference type="CDD" id="cd04190">
    <property type="entry name" value="Chitin_synth_C"/>
    <property type="match status" value="1"/>
</dbReference>
<dbReference type="InterPro" id="IPR004835">
    <property type="entry name" value="Chitin_synth"/>
</dbReference>
<dbReference type="InterPro" id="IPR004834">
    <property type="entry name" value="Chitin_synth_fun"/>
</dbReference>
<dbReference type="InterPro" id="IPR013616">
    <property type="entry name" value="Chitin_synth_N"/>
</dbReference>
<dbReference type="InterPro" id="IPR029044">
    <property type="entry name" value="Nucleotide-diphossugar_trans"/>
</dbReference>
<dbReference type="PANTHER" id="PTHR22914">
    <property type="entry name" value="CHITIN SYNTHASE"/>
    <property type="match status" value="1"/>
</dbReference>
<dbReference type="PANTHER" id="PTHR22914:SF9">
    <property type="entry name" value="CHITIN SYNTHASE 1"/>
    <property type="match status" value="1"/>
</dbReference>
<dbReference type="Pfam" id="PF01644">
    <property type="entry name" value="Chitin_synth_1"/>
    <property type="match status" value="1"/>
</dbReference>
<dbReference type="Pfam" id="PF08407">
    <property type="entry name" value="Chitin_synth_1N"/>
    <property type="match status" value="1"/>
</dbReference>
<dbReference type="SUPFAM" id="SSF53448">
    <property type="entry name" value="Nucleotide-diphospho-sugar transferases"/>
    <property type="match status" value="1"/>
</dbReference>
<reference key="1">
    <citation type="journal article" date="2005" name="Nature">
        <title>The genome sequence of the rice blast fungus Magnaporthe grisea.</title>
        <authorList>
            <person name="Dean R.A."/>
            <person name="Talbot N.J."/>
            <person name="Ebbole D.J."/>
            <person name="Farman M.L."/>
            <person name="Mitchell T.K."/>
            <person name="Orbach M.J."/>
            <person name="Thon M.R."/>
            <person name="Kulkarni R."/>
            <person name="Xu J.-R."/>
            <person name="Pan H."/>
            <person name="Read N.D."/>
            <person name="Lee Y.-H."/>
            <person name="Carbone I."/>
            <person name="Brown D."/>
            <person name="Oh Y.Y."/>
            <person name="Donofrio N."/>
            <person name="Jeong J.S."/>
            <person name="Soanes D.M."/>
            <person name="Djonovic S."/>
            <person name="Kolomiets E."/>
            <person name="Rehmeyer C."/>
            <person name="Li W."/>
            <person name="Harding M."/>
            <person name="Kim S."/>
            <person name="Lebrun M.-H."/>
            <person name="Bohnert H."/>
            <person name="Coughlan S."/>
            <person name="Butler J."/>
            <person name="Calvo S.E."/>
            <person name="Ma L.-J."/>
            <person name="Nicol R."/>
            <person name="Purcell S."/>
            <person name="Nusbaum C."/>
            <person name="Galagan J.E."/>
            <person name="Birren B.W."/>
        </authorList>
    </citation>
    <scope>NUCLEOTIDE SEQUENCE [LARGE SCALE GENOMIC DNA]</scope>
    <source>
        <strain>70-15 / ATCC MYA-4617 / FGSC 8958</strain>
    </source>
</reference>
<reference key="2">
    <citation type="journal article" date="2012" name="PLoS Pathog.">
        <title>Different chitin synthase genes are required for various developmental and plant infection processes in the rice blast fungus Magnaporthe oryzae.</title>
        <authorList>
            <person name="Kong L.A."/>
            <person name="Yang J."/>
            <person name="Li G.T."/>
            <person name="Qi L.L."/>
            <person name="Zhang Y.J."/>
            <person name="Wang C.F."/>
            <person name="Zhao W.S."/>
            <person name="Xu J.R."/>
            <person name="Peng Y.L."/>
        </authorList>
    </citation>
    <scope>FUNCTION</scope>
    <scope>INDUCTION</scope>
    <scope>DISRUPTION PHENOTYPE</scope>
</reference>
<organism>
    <name type="scientific">Pyricularia oryzae (strain 70-15 / ATCC MYA-4617 / FGSC 8958)</name>
    <name type="common">Rice blast fungus</name>
    <name type="synonym">Magnaporthe oryzae</name>
    <dbReference type="NCBI Taxonomy" id="242507"/>
    <lineage>
        <taxon>Eukaryota</taxon>
        <taxon>Fungi</taxon>
        <taxon>Dikarya</taxon>
        <taxon>Ascomycota</taxon>
        <taxon>Pezizomycotina</taxon>
        <taxon>Sordariomycetes</taxon>
        <taxon>Sordariomycetidae</taxon>
        <taxon>Magnaporthales</taxon>
        <taxon>Pyriculariaceae</taxon>
        <taxon>Pyricularia</taxon>
    </lineage>
</organism>